<comment type="function">
    <text evidence="2">Cytokine that acts as a physiological ligand for receptor tyrosine kinase LTK, leading to its activation. Monomeric ALKAL1 binds to LTK, leading to LTK homodimerization and activation. In contrast to ALKAL2, does not act as a potent physiological ligand for ALK.</text>
</comment>
<comment type="subcellular location">
    <subcellularLocation>
        <location evidence="1">Secreted</location>
    </subcellularLocation>
    <subcellularLocation>
        <location evidence="2">Cell membrane</location>
    </subcellularLocation>
    <text evidence="1">Following interaction with receptor tyrosine kinase LTK, associates with the cell membrane, membrane-binding is required to activate LTK.</text>
</comment>
<comment type="similarity">
    <text evidence="4">Belongs to the ALKAL family.</text>
</comment>
<proteinExistence type="inferred from homology"/>
<accession>J3QPP8</accession>
<sequence>MWLTKPSTPVSALLLLALALSPPGTQGRPQRSLAARVAELRPELFLPVTGTRLPPRASRSTEIFPRDLTLKDKFIKHFTGPVTFSAECSKHFHRLYHNTRDCSTPAYYKRCARLLTRLAVSPLCSQT</sequence>
<organism>
    <name type="scientific">Mus musculus</name>
    <name type="common">Mouse</name>
    <dbReference type="NCBI Taxonomy" id="10090"/>
    <lineage>
        <taxon>Eukaryota</taxon>
        <taxon>Metazoa</taxon>
        <taxon>Chordata</taxon>
        <taxon>Craniata</taxon>
        <taxon>Vertebrata</taxon>
        <taxon>Euteleostomi</taxon>
        <taxon>Mammalia</taxon>
        <taxon>Eutheria</taxon>
        <taxon>Euarchontoglires</taxon>
        <taxon>Glires</taxon>
        <taxon>Rodentia</taxon>
        <taxon>Myomorpha</taxon>
        <taxon>Muroidea</taxon>
        <taxon>Muridae</taxon>
        <taxon>Murinae</taxon>
        <taxon>Mus</taxon>
        <taxon>Mus</taxon>
    </lineage>
</organism>
<name>ALKL1_MOUSE</name>
<feature type="signal peptide" evidence="3">
    <location>
        <begin position="1"/>
        <end position="27"/>
    </location>
</feature>
<feature type="chain" id="PRO_5003776676" description="ALK and LTK ligand 1" evidence="3">
    <location>
        <begin position="28"/>
        <end position="127"/>
    </location>
</feature>
<feature type="disulfide bond" evidence="2">
    <location>
        <begin position="88"/>
        <end position="124"/>
    </location>
</feature>
<feature type="disulfide bond" evidence="2">
    <location>
        <begin position="102"/>
        <end position="111"/>
    </location>
</feature>
<protein>
    <recommendedName>
        <fullName evidence="2">ALK and LTK ligand 1</fullName>
    </recommendedName>
    <alternativeName>
        <fullName evidence="2">Augmentor beta</fullName>
        <shortName evidence="2">AUG-beta</shortName>
    </alternativeName>
</protein>
<dbReference type="EMBL" id="AC139064">
    <property type="status" value="NOT_ANNOTATED_CDS"/>
    <property type="molecule type" value="Genomic_DNA"/>
</dbReference>
<dbReference type="CCDS" id="CCDS56620.1"/>
<dbReference type="RefSeq" id="NP_001182661.1">
    <property type="nucleotide sequence ID" value="NM_001195732.1"/>
</dbReference>
<dbReference type="SMR" id="J3QPP8"/>
<dbReference type="FunCoup" id="J3QPP8">
    <property type="interactions" value="2"/>
</dbReference>
<dbReference type="STRING" id="10090.ENSMUSP00000137420"/>
<dbReference type="PhosphoSitePlus" id="J3QPP8"/>
<dbReference type="PaxDb" id="10090-ENSMUSP00000137420"/>
<dbReference type="Antibodypedia" id="24431">
    <property type="antibodies" value="21 antibodies from 7 providers"/>
</dbReference>
<dbReference type="Ensembl" id="ENSMUST00000133144.4">
    <property type="protein sequence ID" value="ENSMUSP00000137420.2"/>
    <property type="gene ID" value="ENSMUSG00000087247.4"/>
</dbReference>
<dbReference type="GeneID" id="620393"/>
<dbReference type="KEGG" id="mmu:620393"/>
<dbReference type="UCSC" id="uc007afv.2">
    <property type="organism name" value="mouse"/>
</dbReference>
<dbReference type="AGR" id="MGI:3645495"/>
<dbReference type="CTD" id="389658"/>
<dbReference type="MGI" id="MGI:3645495">
    <property type="gene designation" value="Alkal1"/>
</dbReference>
<dbReference type="VEuPathDB" id="HostDB:ENSMUSG00000087247"/>
<dbReference type="eggNOG" id="ENOG502RZG1">
    <property type="taxonomic scope" value="Eukaryota"/>
</dbReference>
<dbReference type="GeneTree" id="ENSGT00940000159969"/>
<dbReference type="HOGENOM" id="CLU_126080_0_0_1"/>
<dbReference type="InParanoid" id="J3QPP8"/>
<dbReference type="OMA" id="CYKRCAR"/>
<dbReference type="OrthoDB" id="9807651at2759"/>
<dbReference type="PhylomeDB" id="J3QPP8"/>
<dbReference type="TreeFam" id="TF333390"/>
<dbReference type="Reactome" id="R-MMU-201556">
    <property type="pathway name" value="Signaling by ALK"/>
</dbReference>
<dbReference type="Reactome" id="R-MMU-9842663">
    <property type="pathway name" value="Signaling by LTK"/>
</dbReference>
<dbReference type="BioGRID-ORCS" id="620393">
    <property type="hits" value="1 hit in 78 CRISPR screens"/>
</dbReference>
<dbReference type="ChiTaRS" id="Alkal1">
    <property type="organism name" value="mouse"/>
</dbReference>
<dbReference type="PRO" id="PR:J3QPP8"/>
<dbReference type="Proteomes" id="UP000000589">
    <property type="component" value="Chromosome 1"/>
</dbReference>
<dbReference type="RNAct" id="J3QPP8">
    <property type="molecule type" value="protein"/>
</dbReference>
<dbReference type="Bgee" id="ENSMUSG00000087247">
    <property type="expression patterns" value="Expressed in mesodermal cell in embryo and 5 other cell types or tissues"/>
</dbReference>
<dbReference type="GO" id="GO:0005615">
    <property type="term" value="C:extracellular space"/>
    <property type="evidence" value="ECO:0007669"/>
    <property type="project" value="UniProtKB-KW"/>
</dbReference>
<dbReference type="GO" id="GO:0005886">
    <property type="term" value="C:plasma membrane"/>
    <property type="evidence" value="ECO:0007669"/>
    <property type="project" value="UniProtKB-SubCell"/>
</dbReference>
<dbReference type="GO" id="GO:0005125">
    <property type="term" value="F:cytokine activity"/>
    <property type="evidence" value="ECO:0000250"/>
    <property type="project" value="UniProtKB"/>
</dbReference>
<dbReference type="GO" id="GO:0030298">
    <property type="term" value="F:receptor signaling protein tyrosine kinase activator activity"/>
    <property type="evidence" value="ECO:0000250"/>
    <property type="project" value="UniProtKB"/>
</dbReference>
<dbReference type="GO" id="GO:0030971">
    <property type="term" value="F:receptor tyrosine kinase binding"/>
    <property type="evidence" value="ECO:0007669"/>
    <property type="project" value="Ensembl"/>
</dbReference>
<dbReference type="GO" id="GO:0030297">
    <property type="term" value="F:transmembrane receptor protein tyrosine kinase activator activity"/>
    <property type="evidence" value="ECO:0007669"/>
    <property type="project" value="Ensembl"/>
</dbReference>
<dbReference type="GO" id="GO:0007169">
    <property type="term" value="P:cell surface receptor protein tyrosine kinase signaling pathway"/>
    <property type="evidence" value="ECO:0007669"/>
    <property type="project" value="Ensembl"/>
</dbReference>
<dbReference type="GO" id="GO:0070374">
    <property type="term" value="P:positive regulation of ERK1 and ERK2 cascade"/>
    <property type="evidence" value="ECO:0007669"/>
    <property type="project" value="Ensembl"/>
</dbReference>
<dbReference type="GO" id="GO:0070378">
    <property type="term" value="P:positive regulation of ERK5 cascade"/>
    <property type="evidence" value="ECO:0007669"/>
    <property type="project" value="Ensembl"/>
</dbReference>
<dbReference type="GO" id="GO:0010976">
    <property type="term" value="P:positive regulation of neuron projection development"/>
    <property type="evidence" value="ECO:0007669"/>
    <property type="project" value="Ensembl"/>
</dbReference>
<dbReference type="InterPro" id="IPR029364">
    <property type="entry name" value="ALKL1/2"/>
</dbReference>
<dbReference type="PANTHER" id="PTHR28676:SF1">
    <property type="entry name" value="ALK AND LTK LIGAND 1"/>
    <property type="match status" value="1"/>
</dbReference>
<dbReference type="PANTHER" id="PTHR28676">
    <property type="entry name" value="ALK AND LTK LIGAND 2-RELATED"/>
    <property type="match status" value="1"/>
</dbReference>
<dbReference type="Pfam" id="PF15129">
    <property type="entry name" value="ALKL1_2"/>
    <property type="match status" value="1"/>
</dbReference>
<reference key="1">
    <citation type="journal article" date="2009" name="PLoS Biol.">
        <title>Lineage-specific biology revealed by a finished genome assembly of the mouse.</title>
        <authorList>
            <person name="Church D.M."/>
            <person name="Goodstadt L."/>
            <person name="Hillier L.W."/>
            <person name="Zody M.C."/>
            <person name="Goldstein S."/>
            <person name="She X."/>
            <person name="Bult C.J."/>
            <person name="Agarwala R."/>
            <person name="Cherry J.L."/>
            <person name="DiCuccio M."/>
            <person name="Hlavina W."/>
            <person name="Kapustin Y."/>
            <person name="Meric P."/>
            <person name="Maglott D."/>
            <person name="Birtle Z."/>
            <person name="Marques A.C."/>
            <person name="Graves T."/>
            <person name="Zhou S."/>
            <person name="Teague B."/>
            <person name="Potamousis K."/>
            <person name="Churas C."/>
            <person name="Place M."/>
            <person name="Herschleb J."/>
            <person name="Runnheim R."/>
            <person name="Forrest D."/>
            <person name="Amos-Landgraf J."/>
            <person name="Schwartz D.C."/>
            <person name="Cheng Z."/>
            <person name="Lindblad-Toh K."/>
            <person name="Eichler E.E."/>
            <person name="Ponting C.P."/>
        </authorList>
    </citation>
    <scope>NUCLEOTIDE SEQUENCE [LARGE SCALE GENOMIC DNA]</scope>
    <source>
        <strain>C57BL/6J</strain>
    </source>
</reference>
<gene>
    <name evidence="5" type="primary">Alkal1</name>
    <name evidence="5" type="synonym">Fam150a</name>
</gene>
<keyword id="KW-1003">Cell membrane</keyword>
<keyword id="KW-0202">Cytokine</keyword>
<keyword id="KW-1015">Disulfide bond</keyword>
<keyword id="KW-0472">Membrane</keyword>
<keyword id="KW-1185">Reference proteome</keyword>
<keyword id="KW-0964">Secreted</keyword>
<keyword id="KW-0732">Signal</keyword>
<evidence type="ECO:0000250" key="1">
    <source>
        <dbReference type="UniProtKB" id="Q6UX46"/>
    </source>
</evidence>
<evidence type="ECO:0000250" key="2">
    <source>
        <dbReference type="UniProtKB" id="Q6UXT8"/>
    </source>
</evidence>
<evidence type="ECO:0000255" key="3"/>
<evidence type="ECO:0000305" key="4"/>
<evidence type="ECO:0000312" key="5">
    <source>
        <dbReference type="MGI" id="MGI:3645495"/>
    </source>
</evidence>